<comment type="miscellaneous">
    <text evidence="1">Partially overlaps GLN4.</text>
</comment>
<comment type="caution">
    <text evidence="2">Product of a dubious gene prediction unlikely to encode a functional protein. Because of that it is not part of the S.cerevisiae S288c complete/reference proteome set.</text>
</comment>
<protein>
    <recommendedName>
        <fullName>Putative uncharacterized protein YOR169C</fullName>
    </recommendedName>
</protein>
<sequence>MSWSLLSNIIKKFTLLHHFQPIGYIYKYIHICTLNHSLGSCVLQANYSIQNNLRSRTLFIQSEITYSHSLESTHFFGILIFFNIKFRVFNRINDPWTVLDNVPEVMFHDRFFINDFTFWVDVLQEAFRMRRWIFRFEQLVVNPSFSNSQWRIIF</sequence>
<reference key="1">
    <citation type="journal article" date="1997" name="Nature">
        <title>The nucleotide sequence of Saccharomyces cerevisiae chromosome XV.</title>
        <authorList>
            <person name="Dujon B."/>
            <person name="Albermann K."/>
            <person name="Aldea M."/>
            <person name="Alexandraki D."/>
            <person name="Ansorge W."/>
            <person name="Arino J."/>
            <person name="Benes V."/>
            <person name="Bohn C."/>
            <person name="Bolotin-Fukuhara M."/>
            <person name="Bordonne R."/>
            <person name="Boyer J."/>
            <person name="Camasses A."/>
            <person name="Casamayor A."/>
            <person name="Casas C."/>
            <person name="Cheret G."/>
            <person name="Cziepluch C."/>
            <person name="Daignan-Fornier B."/>
            <person name="Dang V.-D."/>
            <person name="de Haan M."/>
            <person name="Delius H."/>
            <person name="Durand P."/>
            <person name="Fairhead C."/>
            <person name="Feldmann H."/>
            <person name="Gaillon L."/>
            <person name="Galisson F."/>
            <person name="Gamo F.-J."/>
            <person name="Gancedo C."/>
            <person name="Goffeau A."/>
            <person name="Goulding S.E."/>
            <person name="Grivell L.A."/>
            <person name="Habbig B."/>
            <person name="Hand N.J."/>
            <person name="Hani J."/>
            <person name="Hattenhorst U."/>
            <person name="Hebling U."/>
            <person name="Hernando Y."/>
            <person name="Herrero E."/>
            <person name="Heumann K."/>
            <person name="Hiesel R."/>
            <person name="Hilger F."/>
            <person name="Hofmann B."/>
            <person name="Hollenberg C.P."/>
            <person name="Hughes B."/>
            <person name="Jauniaux J.-C."/>
            <person name="Kalogeropoulos A."/>
            <person name="Katsoulou C."/>
            <person name="Kordes E."/>
            <person name="Lafuente M.J."/>
            <person name="Landt O."/>
            <person name="Louis E.J."/>
            <person name="Maarse A.C."/>
            <person name="Madania A."/>
            <person name="Mannhaupt G."/>
            <person name="Marck C."/>
            <person name="Martin R.P."/>
            <person name="Mewes H.-W."/>
            <person name="Michaux G."/>
            <person name="Paces V."/>
            <person name="Parle-McDermott A.G."/>
            <person name="Pearson B.M."/>
            <person name="Perrin A."/>
            <person name="Pettersson B."/>
            <person name="Poch O."/>
            <person name="Pohl T.M."/>
            <person name="Poirey R."/>
            <person name="Portetelle D."/>
            <person name="Pujol A."/>
            <person name="Purnelle B."/>
            <person name="Ramezani Rad M."/>
            <person name="Rechmann S."/>
            <person name="Schwager C."/>
            <person name="Schweizer M."/>
            <person name="Sor F."/>
            <person name="Sterky F."/>
            <person name="Tarassov I.A."/>
            <person name="Teodoru C."/>
            <person name="Tettelin H."/>
            <person name="Thierry A."/>
            <person name="Tobiasch E."/>
            <person name="Tzermia M."/>
            <person name="Uhlen M."/>
            <person name="Unseld M."/>
            <person name="Valens M."/>
            <person name="Vandenbol M."/>
            <person name="Vetter I."/>
            <person name="Vlcek C."/>
            <person name="Voet M."/>
            <person name="Volckaert G."/>
            <person name="Voss H."/>
            <person name="Wambutt R."/>
            <person name="Wedler H."/>
            <person name="Wiemann S."/>
            <person name="Winsor B."/>
            <person name="Wolfe K.H."/>
            <person name="Zollner A."/>
            <person name="Zumstein E."/>
            <person name="Kleine K."/>
        </authorList>
    </citation>
    <scope>NUCLEOTIDE SEQUENCE [LARGE SCALE GENOMIC DNA]</scope>
    <source>
        <strain>ATCC 204508 / S288c</strain>
    </source>
</reference>
<reference key="2">
    <citation type="journal article" date="2014" name="G3 (Bethesda)">
        <title>The reference genome sequence of Saccharomyces cerevisiae: Then and now.</title>
        <authorList>
            <person name="Engel S.R."/>
            <person name="Dietrich F.S."/>
            <person name="Fisk D.G."/>
            <person name="Binkley G."/>
            <person name="Balakrishnan R."/>
            <person name="Costanzo M.C."/>
            <person name="Dwight S.S."/>
            <person name="Hitz B.C."/>
            <person name="Karra K."/>
            <person name="Nash R.S."/>
            <person name="Weng S."/>
            <person name="Wong E.D."/>
            <person name="Lloyd P."/>
            <person name="Skrzypek M.S."/>
            <person name="Miyasato S.R."/>
            <person name="Simison M."/>
            <person name="Cherry J.M."/>
        </authorList>
    </citation>
    <scope>GENOME REANNOTATION</scope>
    <source>
        <strain>ATCC 204508 / S288c</strain>
    </source>
</reference>
<evidence type="ECO:0000305" key="1"/>
<evidence type="ECO:0000305" key="2">
    <source>
    </source>
</evidence>
<feature type="chain" id="PRO_0000299719" description="Putative uncharacterized protein YOR169C">
    <location>
        <begin position="1"/>
        <end position="154"/>
    </location>
</feature>
<gene>
    <name type="ordered locus">YOR169C</name>
    <name type="ORF">O3605</name>
</gene>
<accession>Q08540</accession>
<dbReference type="EMBL" id="Z75076">
    <property type="protein sequence ID" value="CAA99375.1"/>
    <property type="molecule type" value="Genomic_DNA"/>
</dbReference>
<dbReference type="PIR" id="S67057">
    <property type="entry name" value="S67057"/>
</dbReference>
<dbReference type="IntAct" id="Q08540">
    <property type="interactions" value="1"/>
</dbReference>
<dbReference type="STRING" id="4932.YOR169C"/>
<dbReference type="PaxDb" id="4932-YOR169C"/>
<dbReference type="EnsemblFungi" id="YOR169C_mRNA">
    <property type="protein sequence ID" value="YOR169C"/>
    <property type="gene ID" value="YOR169C"/>
</dbReference>
<dbReference type="AGR" id="SGD:S000005695"/>
<dbReference type="SGD" id="S000005695">
    <property type="gene designation" value="YOR169C"/>
</dbReference>
<dbReference type="HOGENOM" id="CLU_1705636_0_0_1"/>
<organism>
    <name type="scientific">Saccharomyces cerevisiae (strain ATCC 204508 / S288c)</name>
    <name type="common">Baker's yeast</name>
    <dbReference type="NCBI Taxonomy" id="559292"/>
    <lineage>
        <taxon>Eukaryota</taxon>
        <taxon>Fungi</taxon>
        <taxon>Dikarya</taxon>
        <taxon>Ascomycota</taxon>
        <taxon>Saccharomycotina</taxon>
        <taxon>Saccharomycetes</taxon>
        <taxon>Saccharomycetales</taxon>
        <taxon>Saccharomycetaceae</taxon>
        <taxon>Saccharomyces</taxon>
    </lineage>
</organism>
<proteinExistence type="uncertain"/>
<name>YO169_YEAST</name>